<comment type="function">
    <text evidence="2">2-oxoglutarate-Fe(II) type oxidoreductase involved in the biosynthesis of limonoids triterpene natural products such as limonin, a compound with insecticidal activity responsible for the bitter taste in citrus (PubMed:36701471). Catalyzes the formation of kihadalactone A (PubMed:36701471).</text>
</comment>
<comment type="catalytic activity">
    <reaction evidence="2">
        <text>(1R,2R,3S,8R,10R,11R,15S,16S)-3-(acetyloxy)-15-(1-hydroxy-4-oxobutan-2-yl)-2,7,7,11,16-pentamethyl-5-oxo-6-oxatetracyclo[9.7.0.0(2,8).0(12,16)]octadec-12-en-10-yl acetate + 2-oxoglutarate + O2 = kihadalactone A + succinate + CO2 + 2 H2O</text>
        <dbReference type="Rhea" id="RHEA:80355"/>
        <dbReference type="ChEBI" id="CHEBI:15377"/>
        <dbReference type="ChEBI" id="CHEBI:15379"/>
        <dbReference type="ChEBI" id="CHEBI:16526"/>
        <dbReference type="ChEBI" id="CHEBI:16810"/>
        <dbReference type="ChEBI" id="CHEBI:30031"/>
        <dbReference type="ChEBI" id="CHEBI:231481"/>
        <dbReference type="ChEBI" id="CHEBI:231482"/>
    </reaction>
    <physiologicalReaction direction="left-to-right" evidence="2">
        <dbReference type="Rhea" id="RHEA:80356"/>
    </physiologicalReaction>
</comment>
<comment type="cofactor">
    <cofactor evidence="1">
        <name>Fe(2+)</name>
        <dbReference type="ChEBI" id="CHEBI:29033"/>
    </cofactor>
    <text evidence="1">Binds 1 Fe(2+) ion per subunit.</text>
</comment>
<comment type="pathway">
    <text evidence="2">Secondary metabolite biosynthesis; terpenoid biosynthesis.</text>
</comment>
<comment type="tissue specificity">
    <text evidence="2">Expressed in maturing fruits and in juice vesicles.</text>
</comment>
<comment type="similarity">
    <text evidence="4">Belongs to the iron/ascorbate-dependent oxidoreductase family.</text>
</comment>
<dbReference type="EC" id="1.14.11.-" evidence="1 2"/>
<dbReference type="EMBL" id="OQ091246">
    <property type="protein sequence ID" value="WCJ12491.1"/>
    <property type="molecule type" value="mRNA"/>
</dbReference>
<dbReference type="EMBL" id="KK784899">
    <property type="status" value="NOT_ANNOTATED_CDS"/>
    <property type="molecule type" value="Genomic_DNA"/>
</dbReference>
<dbReference type="SMR" id="P0DXH0"/>
<dbReference type="UniPathway" id="UPA00213"/>
<dbReference type="Proteomes" id="UP000027120">
    <property type="component" value="Unassembled WGS sequence"/>
</dbReference>
<dbReference type="GO" id="GO:0051213">
    <property type="term" value="F:dioxygenase activity"/>
    <property type="evidence" value="ECO:0007669"/>
    <property type="project" value="UniProtKB-KW"/>
</dbReference>
<dbReference type="GO" id="GO:0046872">
    <property type="term" value="F:metal ion binding"/>
    <property type="evidence" value="ECO:0007669"/>
    <property type="project" value="UniProtKB-KW"/>
</dbReference>
<dbReference type="GO" id="GO:0009058">
    <property type="term" value="P:biosynthetic process"/>
    <property type="evidence" value="ECO:0007669"/>
    <property type="project" value="UniProtKB-ARBA"/>
</dbReference>
<dbReference type="Gene3D" id="2.60.120.330">
    <property type="entry name" value="B-lactam Antibiotic, Isopenicillin N Synthase, Chain"/>
    <property type="match status" value="1"/>
</dbReference>
<dbReference type="InterPro" id="IPR026992">
    <property type="entry name" value="DIOX_N"/>
</dbReference>
<dbReference type="InterPro" id="IPR044861">
    <property type="entry name" value="IPNS-like_FE2OG_OXY"/>
</dbReference>
<dbReference type="InterPro" id="IPR027443">
    <property type="entry name" value="IPNS-like_sf"/>
</dbReference>
<dbReference type="InterPro" id="IPR005123">
    <property type="entry name" value="Oxoglu/Fe-dep_dioxygenase_dom"/>
</dbReference>
<dbReference type="PANTHER" id="PTHR10209:SF867">
    <property type="entry name" value="2-OXOGLUTARATE (2OG) AND FE(II)-DEPENDENT OXYGENASE SUPERFAMILY PROTEIN"/>
    <property type="match status" value="1"/>
</dbReference>
<dbReference type="PANTHER" id="PTHR10209">
    <property type="entry name" value="OXIDOREDUCTASE, 2OG-FE II OXYGENASE FAMILY PROTEIN"/>
    <property type="match status" value="1"/>
</dbReference>
<dbReference type="Pfam" id="PF03171">
    <property type="entry name" value="2OG-FeII_Oxy"/>
    <property type="match status" value="1"/>
</dbReference>
<dbReference type="Pfam" id="PF14226">
    <property type="entry name" value="DIOX_N"/>
    <property type="match status" value="1"/>
</dbReference>
<dbReference type="PRINTS" id="PR00682">
    <property type="entry name" value="IPNSYNTHASE"/>
</dbReference>
<dbReference type="SUPFAM" id="SSF51197">
    <property type="entry name" value="Clavaminate synthase-like"/>
    <property type="match status" value="1"/>
</dbReference>
<dbReference type="PROSITE" id="PS51471">
    <property type="entry name" value="FE2OG_OXY"/>
    <property type="match status" value="1"/>
</dbReference>
<protein>
    <recommendedName>
        <fullName evidence="5">Kihadalactone A synthase LFS</fullName>
        <ecNumber evidence="1 2">1.14.11.-</ecNumber>
    </recommendedName>
    <alternativeName>
        <fullName evidence="3">Limonoid furan synthase 2-ODD</fullName>
        <shortName evidence="3">CsLFS</shortName>
    </alternativeName>
</protein>
<keyword id="KW-0223">Dioxygenase</keyword>
<keyword id="KW-0408">Iron</keyword>
<keyword id="KW-0479">Metal-binding</keyword>
<keyword id="KW-0560">Oxidoreductase</keyword>
<keyword id="KW-1185">Reference proteome</keyword>
<feature type="chain" id="PRO_0000461381" description="Kihadalactone A synthase LFS">
    <location>
        <begin position="1"/>
        <end position="334"/>
    </location>
</feature>
<feature type="domain" description="Fe2OG dioxygenase" evidence="1">
    <location>
        <begin position="181"/>
        <end position="286"/>
    </location>
</feature>
<feature type="binding site" evidence="1">
    <location>
        <position position="208"/>
    </location>
    <ligand>
        <name>Fe cation</name>
        <dbReference type="ChEBI" id="CHEBI:24875"/>
    </ligand>
</feature>
<feature type="binding site" evidence="1">
    <location>
        <position position="210"/>
    </location>
    <ligand>
        <name>Fe cation</name>
        <dbReference type="ChEBI" id="CHEBI:24875"/>
    </ligand>
</feature>
<feature type="binding site" evidence="1">
    <location>
        <position position="269"/>
    </location>
    <ligand>
        <name>Fe cation</name>
        <dbReference type="ChEBI" id="CHEBI:24875"/>
    </ligand>
</feature>
<feature type="binding site" evidence="1">
    <location>
        <position position="277"/>
    </location>
    <ligand>
        <name>2-oxoglutarate</name>
        <dbReference type="ChEBI" id="CHEBI:16810"/>
    </ligand>
</feature>
<evidence type="ECO:0000255" key="1">
    <source>
        <dbReference type="PROSITE-ProRule" id="PRU00805"/>
    </source>
</evidence>
<evidence type="ECO:0000269" key="2">
    <source>
    </source>
</evidence>
<evidence type="ECO:0000303" key="3">
    <source>
    </source>
</evidence>
<evidence type="ECO:0000305" key="4"/>
<evidence type="ECO:0000305" key="5">
    <source>
    </source>
</evidence>
<name>LFS_CITSI</name>
<reference key="1">
    <citation type="journal article" date="2023" name="Science">
        <title>Complex scaffold remodeling in plant triterpene biosynthesis.</title>
        <authorList>
            <person name="De La Pena R."/>
            <person name="Hodgson H."/>
            <person name="Liu J.C."/>
            <person name="Stephenson M.J."/>
            <person name="Martin A.C."/>
            <person name="Owen C."/>
            <person name="Harkess A."/>
            <person name="Leebens-Mack J."/>
            <person name="Jimenez L.E."/>
            <person name="Osbourn A."/>
            <person name="Sattely E.S."/>
        </authorList>
    </citation>
    <scope>NUCLEOTIDE SEQUENCE [MRNA]</scope>
    <scope>FUNCTION</scope>
    <scope>CATALYTIC ACTIVITY</scope>
    <scope>PATHWAY</scope>
    <scope>TISSUE SPECIFICITY</scope>
    <source>
        <strain>cv. Valencia</strain>
    </source>
</reference>
<reference key="2">
    <citation type="submission" date="2014-04" db="EMBL/GenBank/DDBJ databases">
        <authorList>
            <consortium name="International Citrus Genome Consortium"/>
            <person name="Gmitter F."/>
            <person name="Chen C."/>
            <person name="Farmerie W."/>
            <person name="Harkins T."/>
            <person name="Desany B."/>
            <person name="Mohiuddin M."/>
            <person name="Kodira C."/>
            <person name="Borodovsky M."/>
            <person name="Lomsadze A."/>
            <person name="Burns P."/>
            <person name="Jenkins J."/>
            <person name="Prochnik S."/>
            <person name="Shu S."/>
            <person name="Chapman J."/>
            <person name="Pitluck S."/>
            <person name="Schmutz J."/>
            <person name="Rokhsar D."/>
        </authorList>
    </citation>
    <scope>NUCLEOTIDE SEQUENCE [LARGE SCALE GENOMIC DNA]</scope>
    <source>
        <strain>cv. Ridge Pineapple sweet orange</strain>
    </source>
</reference>
<organism>
    <name type="scientific">Citrus sinensis</name>
    <name type="common">Sweet orange</name>
    <name type="synonym">Citrus aurantium var. sinensis</name>
    <dbReference type="NCBI Taxonomy" id="2711"/>
    <lineage>
        <taxon>Eukaryota</taxon>
        <taxon>Viridiplantae</taxon>
        <taxon>Streptophyta</taxon>
        <taxon>Embryophyta</taxon>
        <taxon>Tracheophyta</taxon>
        <taxon>Spermatophyta</taxon>
        <taxon>Magnoliopsida</taxon>
        <taxon>eudicotyledons</taxon>
        <taxon>Gunneridae</taxon>
        <taxon>Pentapetalae</taxon>
        <taxon>rosids</taxon>
        <taxon>malvids</taxon>
        <taxon>Sapindales</taxon>
        <taxon>Rutaceae</taxon>
        <taxon>Aurantioideae</taxon>
        <taxon>Citrus</taxon>
    </lineage>
</organism>
<accession>P0DXH0</accession>
<sequence>MADHSTVNGSEIPVYNLKCIDLANPDVHQSAAVLKQACMESGIFYVINHGLSEELMNEFFGQMKKFFALPMDEKKKLFWNQSLRGYRPPAQAVIDNKTQQKDFGEAYHIGVDVAKDDPNCGKFFYGPNIWPPADILPGWKETMMRYQEETINVGRAIGRIIALALDLNVDFFDQPEILGNKTASYSNMFHYGVPGTDFSKEIVGAPPHCDLNFITLLATDEIWGLQICREKNAQPQLWEAIPPVKGAFIVNVGDMLEMLSNGAFRSILHRVVFGKERYSTGLFLCPSHDYVIECLPTCKSEDNPPKYPTIKTGDYILSRFRQLAADTVKDNKAV</sequence>
<gene>
    <name evidence="3" type="primary">LFS</name>
</gene>
<proteinExistence type="evidence at protein level"/>